<dbReference type="EC" id="2.5.1.19" evidence="1"/>
<dbReference type="EMBL" id="AE017340">
    <property type="protein sequence ID" value="AAV82197.1"/>
    <property type="molecule type" value="Genomic_DNA"/>
</dbReference>
<dbReference type="RefSeq" id="WP_011234603.1">
    <property type="nucleotide sequence ID" value="NC_006512.1"/>
</dbReference>
<dbReference type="SMR" id="Q5QZ50"/>
<dbReference type="STRING" id="283942.IL1357"/>
<dbReference type="GeneID" id="41336533"/>
<dbReference type="KEGG" id="ilo:IL1357"/>
<dbReference type="eggNOG" id="COG0128">
    <property type="taxonomic scope" value="Bacteria"/>
</dbReference>
<dbReference type="HOGENOM" id="CLU_024321_0_0_6"/>
<dbReference type="OrthoDB" id="9809920at2"/>
<dbReference type="UniPathway" id="UPA00053">
    <property type="reaction ID" value="UER00089"/>
</dbReference>
<dbReference type="Proteomes" id="UP000001171">
    <property type="component" value="Chromosome"/>
</dbReference>
<dbReference type="GO" id="GO:0005737">
    <property type="term" value="C:cytoplasm"/>
    <property type="evidence" value="ECO:0007669"/>
    <property type="project" value="UniProtKB-SubCell"/>
</dbReference>
<dbReference type="GO" id="GO:0003866">
    <property type="term" value="F:3-phosphoshikimate 1-carboxyvinyltransferase activity"/>
    <property type="evidence" value="ECO:0007669"/>
    <property type="project" value="UniProtKB-UniRule"/>
</dbReference>
<dbReference type="GO" id="GO:0008652">
    <property type="term" value="P:amino acid biosynthetic process"/>
    <property type="evidence" value="ECO:0007669"/>
    <property type="project" value="UniProtKB-KW"/>
</dbReference>
<dbReference type="GO" id="GO:0009073">
    <property type="term" value="P:aromatic amino acid family biosynthetic process"/>
    <property type="evidence" value="ECO:0007669"/>
    <property type="project" value="UniProtKB-KW"/>
</dbReference>
<dbReference type="GO" id="GO:0009423">
    <property type="term" value="P:chorismate biosynthetic process"/>
    <property type="evidence" value="ECO:0007669"/>
    <property type="project" value="UniProtKB-UniRule"/>
</dbReference>
<dbReference type="CDD" id="cd01556">
    <property type="entry name" value="EPSP_synthase"/>
    <property type="match status" value="1"/>
</dbReference>
<dbReference type="Gene3D" id="3.65.10.10">
    <property type="entry name" value="Enolpyruvate transferase domain"/>
    <property type="match status" value="2"/>
</dbReference>
<dbReference type="HAMAP" id="MF_00210">
    <property type="entry name" value="EPSP_synth"/>
    <property type="match status" value="1"/>
</dbReference>
<dbReference type="InterPro" id="IPR001986">
    <property type="entry name" value="Enolpyruvate_Tfrase_dom"/>
</dbReference>
<dbReference type="InterPro" id="IPR036968">
    <property type="entry name" value="Enolpyruvate_Tfrase_sf"/>
</dbReference>
<dbReference type="InterPro" id="IPR006264">
    <property type="entry name" value="EPSP_synthase"/>
</dbReference>
<dbReference type="InterPro" id="IPR023193">
    <property type="entry name" value="EPSP_synthase_CS"/>
</dbReference>
<dbReference type="InterPro" id="IPR013792">
    <property type="entry name" value="RNA3'P_cycl/enolpyr_Trfase_a/b"/>
</dbReference>
<dbReference type="NCBIfam" id="TIGR01356">
    <property type="entry name" value="aroA"/>
    <property type="match status" value="1"/>
</dbReference>
<dbReference type="PANTHER" id="PTHR21090">
    <property type="entry name" value="AROM/DEHYDROQUINATE SYNTHASE"/>
    <property type="match status" value="1"/>
</dbReference>
<dbReference type="PANTHER" id="PTHR21090:SF5">
    <property type="entry name" value="PENTAFUNCTIONAL AROM POLYPEPTIDE"/>
    <property type="match status" value="1"/>
</dbReference>
<dbReference type="Pfam" id="PF00275">
    <property type="entry name" value="EPSP_synthase"/>
    <property type="match status" value="1"/>
</dbReference>
<dbReference type="PIRSF" id="PIRSF000505">
    <property type="entry name" value="EPSPS"/>
    <property type="match status" value="1"/>
</dbReference>
<dbReference type="SUPFAM" id="SSF55205">
    <property type="entry name" value="EPT/RTPC-like"/>
    <property type="match status" value="1"/>
</dbReference>
<dbReference type="PROSITE" id="PS00104">
    <property type="entry name" value="EPSP_SYNTHASE_1"/>
    <property type="match status" value="1"/>
</dbReference>
<dbReference type="PROSITE" id="PS00885">
    <property type="entry name" value="EPSP_SYNTHASE_2"/>
    <property type="match status" value="1"/>
</dbReference>
<keyword id="KW-0028">Amino-acid biosynthesis</keyword>
<keyword id="KW-0057">Aromatic amino acid biosynthesis</keyword>
<keyword id="KW-0963">Cytoplasm</keyword>
<keyword id="KW-1185">Reference proteome</keyword>
<keyword id="KW-0808">Transferase</keyword>
<feature type="chain" id="PRO_1000012444" description="3-phosphoshikimate 1-carboxyvinyltransferase">
    <location>
        <begin position="1"/>
        <end position="429"/>
    </location>
</feature>
<feature type="active site" description="Proton acceptor" evidence="1">
    <location>
        <position position="316"/>
    </location>
</feature>
<feature type="binding site" evidence="1">
    <location>
        <position position="23"/>
    </location>
    <ligand>
        <name>3-phosphoshikimate</name>
        <dbReference type="ChEBI" id="CHEBI:145989"/>
    </ligand>
</feature>
<feature type="binding site" evidence="1">
    <location>
        <position position="23"/>
    </location>
    <ligand>
        <name>phosphoenolpyruvate</name>
        <dbReference type="ChEBI" id="CHEBI:58702"/>
    </ligand>
</feature>
<feature type="binding site" evidence="1">
    <location>
        <position position="24"/>
    </location>
    <ligand>
        <name>3-phosphoshikimate</name>
        <dbReference type="ChEBI" id="CHEBI:145989"/>
    </ligand>
</feature>
<feature type="binding site" evidence="1">
    <location>
        <position position="28"/>
    </location>
    <ligand>
        <name>3-phosphoshikimate</name>
        <dbReference type="ChEBI" id="CHEBI:145989"/>
    </ligand>
</feature>
<feature type="binding site" evidence="1">
    <location>
        <position position="94"/>
    </location>
    <ligand>
        <name>phosphoenolpyruvate</name>
        <dbReference type="ChEBI" id="CHEBI:58702"/>
    </ligand>
</feature>
<feature type="binding site" evidence="1">
    <location>
        <position position="126"/>
    </location>
    <ligand>
        <name>phosphoenolpyruvate</name>
        <dbReference type="ChEBI" id="CHEBI:58702"/>
    </ligand>
</feature>
<feature type="binding site" evidence="1">
    <location>
        <position position="171"/>
    </location>
    <ligand>
        <name>3-phosphoshikimate</name>
        <dbReference type="ChEBI" id="CHEBI:145989"/>
    </ligand>
</feature>
<feature type="binding site" evidence="1">
    <location>
        <position position="172"/>
    </location>
    <ligand>
        <name>3-phosphoshikimate</name>
        <dbReference type="ChEBI" id="CHEBI:145989"/>
    </ligand>
</feature>
<feature type="binding site" evidence="1">
    <location>
        <position position="173"/>
    </location>
    <ligand>
        <name>3-phosphoshikimate</name>
        <dbReference type="ChEBI" id="CHEBI:145989"/>
    </ligand>
</feature>
<feature type="binding site" evidence="1">
    <location>
        <position position="173"/>
    </location>
    <ligand>
        <name>phosphoenolpyruvate</name>
        <dbReference type="ChEBI" id="CHEBI:58702"/>
    </ligand>
</feature>
<feature type="binding site" evidence="1">
    <location>
        <position position="199"/>
    </location>
    <ligand>
        <name>3-phosphoshikimate</name>
        <dbReference type="ChEBI" id="CHEBI:145989"/>
    </ligand>
</feature>
<feature type="binding site" evidence="1">
    <location>
        <position position="316"/>
    </location>
    <ligand>
        <name>3-phosphoshikimate</name>
        <dbReference type="ChEBI" id="CHEBI:145989"/>
    </ligand>
</feature>
<feature type="binding site" evidence="1">
    <location>
        <position position="339"/>
    </location>
    <ligand>
        <name>3-phosphoshikimate</name>
        <dbReference type="ChEBI" id="CHEBI:145989"/>
    </ligand>
</feature>
<feature type="binding site" evidence="1">
    <location>
        <position position="343"/>
    </location>
    <ligand>
        <name>3-phosphoshikimate</name>
        <dbReference type="ChEBI" id="CHEBI:145989"/>
    </ligand>
</feature>
<feature type="binding site" evidence="1">
    <location>
        <position position="347"/>
    </location>
    <ligand>
        <name>phosphoenolpyruvate</name>
        <dbReference type="ChEBI" id="CHEBI:58702"/>
    </ligand>
</feature>
<feature type="binding site" evidence="1">
    <location>
        <position position="389"/>
    </location>
    <ligand>
        <name>phosphoenolpyruvate</name>
        <dbReference type="ChEBI" id="CHEBI:58702"/>
    </ligand>
</feature>
<feature type="binding site" evidence="1">
    <location>
        <position position="414"/>
    </location>
    <ligand>
        <name>phosphoenolpyruvate</name>
        <dbReference type="ChEBI" id="CHEBI:58702"/>
    </ligand>
</feature>
<organism>
    <name type="scientific">Idiomarina loihiensis (strain ATCC BAA-735 / DSM 15497 / L2-TR)</name>
    <dbReference type="NCBI Taxonomy" id="283942"/>
    <lineage>
        <taxon>Bacteria</taxon>
        <taxon>Pseudomonadati</taxon>
        <taxon>Pseudomonadota</taxon>
        <taxon>Gammaproteobacteria</taxon>
        <taxon>Alteromonadales</taxon>
        <taxon>Idiomarinaceae</taxon>
        <taxon>Idiomarina</taxon>
    </lineage>
</organism>
<gene>
    <name evidence="1" type="primary">aroA</name>
    <name type="ordered locus">IL1357</name>
</gene>
<reference key="1">
    <citation type="journal article" date="2004" name="Proc. Natl. Acad. Sci. U.S.A.">
        <title>Genome sequence of the deep-sea gamma-proteobacterium Idiomarina loihiensis reveals amino acid fermentation as a source of carbon and energy.</title>
        <authorList>
            <person name="Hou S."/>
            <person name="Saw J.H."/>
            <person name="Lee K.S."/>
            <person name="Freitas T.A."/>
            <person name="Belisle C."/>
            <person name="Kawarabayasi Y."/>
            <person name="Donachie S.P."/>
            <person name="Pikina A."/>
            <person name="Galperin M.Y."/>
            <person name="Koonin E.V."/>
            <person name="Makarova K.S."/>
            <person name="Omelchenko M.V."/>
            <person name="Sorokin A."/>
            <person name="Wolf Y.I."/>
            <person name="Li Q.X."/>
            <person name="Keum Y.S."/>
            <person name="Campbell S."/>
            <person name="Denery J."/>
            <person name="Aizawa S."/>
            <person name="Shibata S."/>
            <person name="Malahoff A."/>
            <person name="Alam M."/>
        </authorList>
    </citation>
    <scope>NUCLEOTIDE SEQUENCE [LARGE SCALE GENOMIC DNA]</scope>
    <source>
        <strain>ATCC BAA-735 / DSM 15497 / L2-TR</strain>
    </source>
</reference>
<name>AROA_IDILO</name>
<accession>Q5QZ50</accession>
<protein>
    <recommendedName>
        <fullName evidence="1">3-phosphoshikimate 1-carboxyvinyltransferase</fullName>
        <ecNumber evidence="1">2.5.1.19</ecNumber>
    </recommendedName>
    <alternativeName>
        <fullName evidence="1">5-enolpyruvylshikimate-3-phosphate synthase</fullName>
        <shortName evidence="1">EPSP synthase</shortName>
        <shortName evidence="1">EPSPS</shortName>
    </alternativeName>
</protein>
<proteinExistence type="inferred from homology"/>
<sequence>MVNSIHLEPRQHCRGTVTLPGSKSIANRALLMAALCQTPVILHNLLVSDDTSRMREALNALGVSFEDDKLITRVNGLGGGWNKPASELYLGNAGTAMRPLIAVLAATLKNEHQAVVLKGDARMHERPVKHLIDAIQPRGAGVNYLGETGFPPLEMTSGLKPGDFEIDGSVSSQFISALLMALPLLPGDSTLTLKGNVVSRPYIELTLQMLSDFGISIKEDSPQCYAIPGGQCYQSPGEYWVEGDASAASYWMAAALLGKGPVEIIGVGKNSIQGDKRFAEVIEAMGASVSYRKNSMTVSGTGSVQGIDQDFNDIPDAAMTVAPLALFANKPTTIRNVANWRVKETDRLHAMATELRKLGATVDEGEDFLRIEPLKHWRHIAIDTYDDHRMAMCFSLVAFSSAGVTINDPGCCAKTYPDYFSEFSRLCHS</sequence>
<evidence type="ECO:0000255" key="1">
    <source>
        <dbReference type="HAMAP-Rule" id="MF_00210"/>
    </source>
</evidence>
<comment type="function">
    <text evidence="1">Catalyzes the transfer of the enolpyruvyl moiety of phosphoenolpyruvate (PEP) to the 5-hydroxyl of shikimate-3-phosphate (S3P) to produce enolpyruvyl shikimate-3-phosphate and inorganic phosphate.</text>
</comment>
<comment type="catalytic activity">
    <reaction evidence="1">
        <text>3-phosphoshikimate + phosphoenolpyruvate = 5-O-(1-carboxyvinyl)-3-phosphoshikimate + phosphate</text>
        <dbReference type="Rhea" id="RHEA:21256"/>
        <dbReference type="ChEBI" id="CHEBI:43474"/>
        <dbReference type="ChEBI" id="CHEBI:57701"/>
        <dbReference type="ChEBI" id="CHEBI:58702"/>
        <dbReference type="ChEBI" id="CHEBI:145989"/>
        <dbReference type="EC" id="2.5.1.19"/>
    </reaction>
    <physiologicalReaction direction="left-to-right" evidence="1">
        <dbReference type="Rhea" id="RHEA:21257"/>
    </physiologicalReaction>
</comment>
<comment type="pathway">
    <text evidence="1">Metabolic intermediate biosynthesis; chorismate biosynthesis; chorismate from D-erythrose 4-phosphate and phosphoenolpyruvate: step 6/7.</text>
</comment>
<comment type="subunit">
    <text evidence="1">Monomer.</text>
</comment>
<comment type="subcellular location">
    <subcellularLocation>
        <location evidence="1">Cytoplasm</location>
    </subcellularLocation>
</comment>
<comment type="similarity">
    <text evidence="1">Belongs to the EPSP synthase family.</text>
</comment>